<reference key="1">
    <citation type="journal article" date="2006" name="Comp. Biochem. Physiol.">
        <title>Diversity of long-chain toxins in Tityus zulianus and Tityus discrepans venoms (Scorpiones, Buthidae): molecular, immunological, and mass spectral analyses.</title>
        <authorList>
            <person name="Borges A."/>
            <person name="Garcia C.C."/>
            <person name="Lugo E."/>
            <person name="Alfonzo M.J."/>
            <person name="Jowers M.J."/>
            <person name="Op den Camp H.J.M."/>
        </authorList>
    </citation>
    <scope>NUCLEOTIDE SEQUENCE [MRNA]</scope>
    <scope>MASS SPECTROMETRY</scope>
    <source>
        <tissue>Venom</tissue>
        <tissue>Venom gland</tissue>
    </source>
</reference>
<reference key="2">
    <citation type="journal article" date="2012" name="PLoS ONE">
        <title>Identification and phylogenetic analysis of Tityus pachyurus and Tityus obscurus novel putative Na+-channel scorpion toxins.</title>
        <authorList>
            <person name="Guerrero-Vargas J.A."/>
            <person name="Mourao C.B."/>
            <person name="Quintero-Hernandez V."/>
            <person name="Possani L.D."/>
            <person name="Schwartz E.F."/>
        </authorList>
    </citation>
    <scope>NOMENCLATURE</scope>
</reference>
<name>SCX5_TITDI</name>
<accession>Q1I169</accession>
<comment type="function">
    <text evidence="1">Beta toxins bind voltage-independently at site-4 of sodium channels (Nav) and shift the voltage of activation toward more negative potentials thereby affecting sodium channel activation and promoting spontaneous and repetitive firing.</text>
</comment>
<comment type="subcellular location">
    <subcellularLocation>
        <location>Secreted</location>
    </subcellularLocation>
</comment>
<comment type="tissue specificity">
    <text>Expressed by the venom gland.</text>
</comment>
<comment type="domain">
    <text evidence="4">Has the structural arrangement of an alpha-helix connected to antiparallel beta-sheets by disulfide bonds (CS-alpha/beta).</text>
</comment>
<comment type="mass spectrometry"/>
<comment type="miscellaneous">
    <text evidence="1">Negative results: does not affect the cardiac Nav1.5/SCN5A, the peripheral nerve channel Nav1.7/SCN9A, and the voltage-dependent potassium channel Kv1.5/KCNA5.</text>
</comment>
<comment type="similarity">
    <text evidence="4">Belongs to the long (4 C-C) scorpion toxin superfamily. Sodium channel inhibitor family. Beta subfamily.</text>
</comment>
<organism>
    <name type="scientific">Tityus discrepans</name>
    <name type="common">Venezuelan scorpion</name>
    <dbReference type="NCBI Taxonomy" id="57059"/>
    <lineage>
        <taxon>Eukaryota</taxon>
        <taxon>Metazoa</taxon>
        <taxon>Ecdysozoa</taxon>
        <taxon>Arthropoda</taxon>
        <taxon>Chelicerata</taxon>
        <taxon>Arachnida</taxon>
        <taxon>Scorpiones</taxon>
        <taxon>Buthida</taxon>
        <taxon>Buthoidea</taxon>
        <taxon>Buthidae</taxon>
        <taxon>Tityus</taxon>
    </lineage>
</organism>
<evidence type="ECO:0000250" key="1"/>
<evidence type="ECO:0000255" key="2">
    <source>
        <dbReference type="PROSITE-ProRule" id="PRU01210"/>
    </source>
</evidence>
<evidence type="ECO:0000269" key="3">
    <source>
    </source>
</evidence>
<evidence type="ECO:0000305" key="4"/>
<proteinExistence type="evidence at protein level"/>
<keyword id="KW-0027">Amidation</keyword>
<keyword id="KW-1015">Disulfide bond</keyword>
<keyword id="KW-0872">Ion channel impairing toxin</keyword>
<keyword id="KW-0528">Neurotoxin</keyword>
<keyword id="KW-0964">Secreted</keyword>
<keyword id="KW-0732">Signal</keyword>
<keyword id="KW-0800">Toxin</keyword>
<keyword id="KW-0738">Voltage-gated sodium channel impairing toxin</keyword>
<dbReference type="EMBL" id="DQ075237">
    <property type="protein sequence ID" value="AAZ29716.1"/>
    <property type="molecule type" value="mRNA"/>
</dbReference>
<dbReference type="SMR" id="Q1I169"/>
<dbReference type="GO" id="GO:0005576">
    <property type="term" value="C:extracellular region"/>
    <property type="evidence" value="ECO:0007669"/>
    <property type="project" value="UniProtKB-SubCell"/>
</dbReference>
<dbReference type="GO" id="GO:0019871">
    <property type="term" value="F:sodium channel inhibitor activity"/>
    <property type="evidence" value="ECO:0007669"/>
    <property type="project" value="InterPro"/>
</dbReference>
<dbReference type="GO" id="GO:0090729">
    <property type="term" value="F:toxin activity"/>
    <property type="evidence" value="ECO:0007669"/>
    <property type="project" value="UniProtKB-KW"/>
</dbReference>
<dbReference type="GO" id="GO:0006952">
    <property type="term" value="P:defense response"/>
    <property type="evidence" value="ECO:0007669"/>
    <property type="project" value="InterPro"/>
</dbReference>
<dbReference type="CDD" id="cd23106">
    <property type="entry name" value="neurotoxins_LC_scorpion"/>
    <property type="match status" value="1"/>
</dbReference>
<dbReference type="FunFam" id="3.30.30.10:FF:000002">
    <property type="entry name" value="Alpha-like toxin BmK-M1"/>
    <property type="match status" value="1"/>
</dbReference>
<dbReference type="Gene3D" id="3.30.30.10">
    <property type="entry name" value="Knottin, scorpion toxin-like"/>
    <property type="match status" value="1"/>
</dbReference>
<dbReference type="InterPro" id="IPR044062">
    <property type="entry name" value="LCN-type_CS_alpha_beta_dom"/>
</dbReference>
<dbReference type="InterPro" id="IPR003614">
    <property type="entry name" value="Scorpion_toxin-like"/>
</dbReference>
<dbReference type="InterPro" id="IPR036574">
    <property type="entry name" value="Scorpion_toxin-like_sf"/>
</dbReference>
<dbReference type="InterPro" id="IPR018218">
    <property type="entry name" value="Scorpion_toxinL"/>
</dbReference>
<dbReference type="InterPro" id="IPR002061">
    <property type="entry name" value="Scorpion_toxinL/defensin"/>
</dbReference>
<dbReference type="Pfam" id="PF00537">
    <property type="entry name" value="Toxin_3"/>
    <property type="match status" value="1"/>
</dbReference>
<dbReference type="PRINTS" id="PR00285">
    <property type="entry name" value="SCORPNTOXIN"/>
</dbReference>
<dbReference type="SMART" id="SM00505">
    <property type="entry name" value="Knot1"/>
    <property type="match status" value="1"/>
</dbReference>
<dbReference type="SUPFAM" id="SSF57095">
    <property type="entry name" value="Scorpion toxin-like"/>
    <property type="match status" value="1"/>
</dbReference>
<dbReference type="PROSITE" id="PS51863">
    <property type="entry name" value="LCN_CSAB"/>
    <property type="match status" value="1"/>
</dbReference>
<sequence>IGMVVECKDGYLVGNDGCKYSCSTRPGHYCASECSRVKGKDGYCYAWLACYCYNMPNWAPIWNSATNRCRGRK</sequence>
<feature type="signal peptide" evidence="1">
    <location>
        <begin position="1" status="less than"/>
        <end position="7"/>
    </location>
</feature>
<feature type="chain" id="PRO_0000253768" description="Toxin Td5">
    <location>
        <begin position="8"/>
        <end position="70"/>
    </location>
</feature>
<feature type="domain" description="LCN-type CS-alpha/beta" evidence="2">
    <location>
        <begin position="8"/>
        <end position="70"/>
    </location>
</feature>
<feature type="modified residue" description="Arginine amide" evidence="1">
    <location>
        <position position="70"/>
    </location>
</feature>
<feature type="disulfide bond" evidence="2">
    <location>
        <begin position="18"/>
        <end position="69"/>
    </location>
</feature>
<feature type="disulfide bond" evidence="2">
    <location>
        <begin position="22"/>
        <end position="44"/>
    </location>
</feature>
<feature type="disulfide bond" evidence="2">
    <location>
        <begin position="30"/>
        <end position="50"/>
    </location>
</feature>
<feature type="disulfide bond" evidence="2">
    <location>
        <begin position="34"/>
        <end position="52"/>
    </location>
</feature>
<feature type="non-terminal residue">
    <location>
        <position position="1"/>
    </location>
</feature>
<protein>
    <recommendedName>
        <fullName>Toxin Td5</fullName>
    </recommendedName>
    <alternativeName>
        <fullName>P*T-beta* NaTx14.4</fullName>
    </alternativeName>
</protein>